<feature type="chain" id="PRO_0000326921" description="Protoheme IX farnesyltransferase 1">
    <location>
        <begin position="1"/>
        <end position="299"/>
    </location>
</feature>
<feature type="transmembrane region" description="Helical" evidence="1">
    <location>
        <begin position="25"/>
        <end position="45"/>
    </location>
</feature>
<feature type="transmembrane region" description="Helical" evidence="1">
    <location>
        <begin position="47"/>
        <end position="67"/>
    </location>
</feature>
<feature type="transmembrane region" description="Helical" evidence="1">
    <location>
        <begin position="95"/>
        <end position="115"/>
    </location>
</feature>
<feature type="transmembrane region" description="Helical" evidence="1">
    <location>
        <begin position="119"/>
        <end position="139"/>
    </location>
</feature>
<feature type="transmembrane region" description="Helical" evidence="1">
    <location>
        <begin position="147"/>
        <end position="167"/>
    </location>
</feature>
<feature type="transmembrane region" description="Helical" evidence="1">
    <location>
        <begin position="173"/>
        <end position="193"/>
    </location>
</feature>
<feature type="transmembrane region" description="Helical" evidence="1">
    <location>
        <begin position="217"/>
        <end position="237"/>
    </location>
</feature>
<feature type="transmembrane region" description="Helical" evidence="1">
    <location>
        <begin position="243"/>
        <end position="263"/>
    </location>
</feature>
<feature type="transmembrane region" description="Helical" evidence="1">
    <location>
        <begin position="279"/>
        <end position="299"/>
    </location>
</feature>
<protein>
    <recommendedName>
        <fullName evidence="1">Protoheme IX farnesyltransferase 1</fullName>
        <ecNumber evidence="1">2.5.1.141</ecNumber>
    </recommendedName>
    <alternativeName>
        <fullName evidence="1">Heme B farnesyltransferase 1</fullName>
    </alternativeName>
    <alternativeName>
        <fullName evidence="1">Heme O synthase 1</fullName>
    </alternativeName>
</protein>
<accession>Q1IGZ4</accession>
<proteinExistence type="inferred from homology"/>
<reference key="1">
    <citation type="journal article" date="2006" name="Nat. Biotechnol.">
        <title>Complete genome sequence of the entomopathogenic and metabolically versatile soil bacterium Pseudomonas entomophila.</title>
        <authorList>
            <person name="Vodovar N."/>
            <person name="Vallenet D."/>
            <person name="Cruveiller S."/>
            <person name="Rouy Z."/>
            <person name="Barbe V."/>
            <person name="Acosta C."/>
            <person name="Cattolico L."/>
            <person name="Jubin C."/>
            <person name="Lajus A."/>
            <person name="Segurens B."/>
            <person name="Vacherie B."/>
            <person name="Wincker P."/>
            <person name="Weissenbach J."/>
            <person name="Lemaitre B."/>
            <person name="Medigue C."/>
            <person name="Boccard F."/>
        </authorList>
    </citation>
    <scope>NUCLEOTIDE SEQUENCE [LARGE SCALE GENOMIC DNA]</scope>
    <source>
        <strain>L48</strain>
    </source>
</reference>
<organism>
    <name type="scientific">Pseudomonas entomophila (strain L48)</name>
    <dbReference type="NCBI Taxonomy" id="384676"/>
    <lineage>
        <taxon>Bacteria</taxon>
        <taxon>Pseudomonadati</taxon>
        <taxon>Pseudomonadota</taxon>
        <taxon>Gammaproteobacteria</taxon>
        <taxon>Pseudomonadales</taxon>
        <taxon>Pseudomonadaceae</taxon>
        <taxon>Pseudomonas</taxon>
    </lineage>
</organism>
<name>CYOE1_PSEE4</name>
<sequence>MATLLSTERPRTGWRDYMELTKPKVVVLMLITSLVGMFLATRAGVAWSVLLFGNLGIGLCAGGAAVVNHVVDRRIDALMARTHKRPLAQGRVAPLPALAFALLLAVMGLALLLAFTNTLTAWLTLASLLGYAVLYTGFLKRATPQNIVIGGLAGAAPPLLGWVAVSGHVSAEPLLLVLIIFAWTPPHFWALAIHRKAEYEKADIPMLPVTHGEHYTALHILLYTLILLAVSLLPYAIHMSGPLYLACALALGLRFLHWAWVLYRGTRPHAAIKTFKYSIGYLFALFIALLVDHYLLLNL</sequence>
<comment type="function">
    <text evidence="1">Converts heme B (protoheme IX) to heme O by substitution of the vinyl group on carbon 2 of heme B porphyrin ring with a hydroxyethyl farnesyl side group.</text>
</comment>
<comment type="catalytic activity">
    <reaction evidence="1">
        <text>heme b + (2E,6E)-farnesyl diphosphate + H2O = Fe(II)-heme o + diphosphate</text>
        <dbReference type="Rhea" id="RHEA:28070"/>
        <dbReference type="ChEBI" id="CHEBI:15377"/>
        <dbReference type="ChEBI" id="CHEBI:33019"/>
        <dbReference type="ChEBI" id="CHEBI:60344"/>
        <dbReference type="ChEBI" id="CHEBI:60530"/>
        <dbReference type="ChEBI" id="CHEBI:175763"/>
        <dbReference type="EC" id="2.5.1.141"/>
    </reaction>
</comment>
<comment type="pathway">
    <text evidence="1">Porphyrin-containing compound metabolism; heme O biosynthesis; heme O from protoheme: step 1/1.</text>
</comment>
<comment type="subcellular location">
    <subcellularLocation>
        <location evidence="1">Cell inner membrane</location>
        <topology evidence="1">Multi-pass membrane protein</topology>
    </subcellularLocation>
</comment>
<comment type="miscellaneous">
    <text evidence="1">Carbon 2 of the heme B porphyrin ring is defined according to the Fischer nomenclature.</text>
</comment>
<comment type="similarity">
    <text evidence="1">Belongs to the UbiA prenyltransferase family. Protoheme IX farnesyltransferase subfamily.</text>
</comment>
<evidence type="ECO:0000255" key="1">
    <source>
        <dbReference type="HAMAP-Rule" id="MF_00154"/>
    </source>
</evidence>
<keyword id="KW-0997">Cell inner membrane</keyword>
<keyword id="KW-1003">Cell membrane</keyword>
<keyword id="KW-0350">Heme biosynthesis</keyword>
<keyword id="KW-0472">Membrane</keyword>
<keyword id="KW-0808">Transferase</keyword>
<keyword id="KW-0812">Transmembrane</keyword>
<keyword id="KW-1133">Transmembrane helix</keyword>
<gene>
    <name evidence="1" type="primary">cyoE1</name>
    <name type="ordered locus">PSEEN0064</name>
</gene>
<dbReference type="EC" id="2.5.1.141" evidence="1"/>
<dbReference type="EMBL" id="CT573326">
    <property type="protein sequence ID" value="CAK13058.1"/>
    <property type="molecule type" value="Genomic_DNA"/>
</dbReference>
<dbReference type="RefSeq" id="WP_011531519.1">
    <property type="nucleotide sequence ID" value="NC_008027.1"/>
</dbReference>
<dbReference type="SMR" id="Q1IGZ4"/>
<dbReference type="STRING" id="384676.PSEEN0064"/>
<dbReference type="GeneID" id="32803432"/>
<dbReference type="KEGG" id="pen:PSEEN0064"/>
<dbReference type="eggNOG" id="COG0109">
    <property type="taxonomic scope" value="Bacteria"/>
</dbReference>
<dbReference type="HOGENOM" id="CLU_029631_0_2_6"/>
<dbReference type="OrthoDB" id="9814417at2"/>
<dbReference type="UniPathway" id="UPA00834">
    <property type="reaction ID" value="UER00712"/>
</dbReference>
<dbReference type="Proteomes" id="UP000000658">
    <property type="component" value="Chromosome"/>
</dbReference>
<dbReference type="GO" id="GO:0005886">
    <property type="term" value="C:plasma membrane"/>
    <property type="evidence" value="ECO:0007669"/>
    <property type="project" value="UniProtKB-SubCell"/>
</dbReference>
<dbReference type="GO" id="GO:0008495">
    <property type="term" value="F:protoheme IX farnesyltransferase activity"/>
    <property type="evidence" value="ECO:0007669"/>
    <property type="project" value="UniProtKB-UniRule"/>
</dbReference>
<dbReference type="GO" id="GO:0048034">
    <property type="term" value="P:heme O biosynthetic process"/>
    <property type="evidence" value="ECO:0007669"/>
    <property type="project" value="UniProtKB-UniRule"/>
</dbReference>
<dbReference type="CDD" id="cd13957">
    <property type="entry name" value="PT_UbiA_Cox10"/>
    <property type="match status" value="1"/>
</dbReference>
<dbReference type="FunFam" id="1.10.357.140:FF:000001">
    <property type="entry name" value="Protoheme IX farnesyltransferase"/>
    <property type="match status" value="1"/>
</dbReference>
<dbReference type="Gene3D" id="1.10.357.140">
    <property type="entry name" value="UbiA prenyltransferase"/>
    <property type="match status" value="1"/>
</dbReference>
<dbReference type="HAMAP" id="MF_00154">
    <property type="entry name" value="CyoE_CtaB"/>
    <property type="match status" value="1"/>
</dbReference>
<dbReference type="InterPro" id="IPR006369">
    <property type="entry name" value="Protohaem_IX_farnesylTrfase"/>
</dbReference>
<dbReference type="InterPro" id="IPR000537">
    <property type="entry name" value="UbiA_prenyltransferase"/>
</dbReference>
<dbReference type="InterPro" id="IPR030470">
    <property type="entry name" value="UbiA_prenylTrfase_CS"/>
</dbReference>
<dbReference type="InterPro" id="IPR044878">
    <property type="entry name" value="UbiA_sf"/>
</dbReference>
<dbReference type="NCBIfam" id="TIGR01473">
    <property type="entry name" value="cyoE_ctaB"/>
    <property type="match status" value="1"/>
</dbReference>
<dbReference type="NCBIfam" id="NF003349">
    <property type="entry name" value="PRK04375.1-2"/>
    <property type="match status" value="1"/>
</dbReference>
<dbReference type="PANTHER" id="PTHR43448:SF7">
    <property type="entry name" value="4-HYDROXYBENZOATE SOLANESYLTRANSFERASE"/>
    <property type="match status" value="1"/>
</dbReference>
<dbReference type="PANTHER" id="PTHR43448">
    <property type="entry name" value="PROTOHEME IX FARNESYLTRANSFERASE, MITOCHONDRIAL"/>
    <property type="match status" value="1"/>
</dbReference>
<dbReference type="Pfam" id="PF01040">
    <property type="entry name" value="UbiA"/>
    <property type="match status" value="1"/>
</dbReference>
<dbReference type="PROSITE" id="PS00943">
    <property type="entry name" value="UBIA"/>
    <property type="match status" value="1"/>
</dbReference>